<feature type="chain" id="PRO_1000143413" description="ATP synthase subunit alpha">
    <location>
        <begin position="1"/>
        <end position="549"/>
    </location>
</feature>
<feature type="region of interest" description="Disordered" evidence="2">
    <location>
        <begin position="513"/>
        <end position="549"/>
    </location>
</feature>
<feature type="compositionally biased region" description="Basic residues" evidence="2">
    <location>
        <begin position="540"/>
        <end position="549"/>
    </location>
</feature>
<feature type="binding site" evidence="1">
    <location>
        <begin position="172"/>
        <end position="179"/>
    </location>
    <ligand>
        <name>ATP</name>
        <dbReference type="ChEBI" id="CHEBI:30616"/>
    </ligand>
</feature>
<feature type="site" description="Required for activity" evidence="1">
    <location>
        <position position="373"/>
    </location>
</feature>
<name>ATPA_MYCMM</name>
<accession>B2HQK4</accession>
<evidence type="ECO:0000255" key="1">
    <source>
        <dbReference type="HAMAP-Rule" id="MF_01346"/>
    </source>
</evidence>
<evidence type="ECO:0000256" key="2">
    <source>
        <dbReference type="SAM" id="MobiDB-lite"/>
    </source>
</evidence>
<proteinExistence type="inferred from homology"/>
<comment type="function">
    <text evidence="1">Produces ATP from ADP in the presence of a proton gradient across the membrane. The alpha chain is a regulatory subunit.</text>
</comment>
<comment type="catalytic activity">
    <reaction evidence="1">
        <text>ATP + H2O + 4 H(+)(in) = ADP + phosphate + 5 H(+)(out)</text>
        <dbReference type="Rhea" id="RHEA:57720"/>
        <dbReference type="ChEBI" id="CHEBI:15377"/>
        <dbReference type="ChEBI" id="CHEBI:15378"/>
        <dbReference type="ChEBI" id="CHEBI:30616"/>
        <dbReference type="ChEBI" id="CHEBI:43474"/>
        <dbReference type="ChEBI" id="CHEBI:456216"/>
        <dbReference type="EC" id="7.1.2.2"/>
    </reaction>
</comment>
<comment type="subunit">
    <text evidence="1">F-type ATPases have 2 components, CF(1) - the catalytic core - and CF(0) - the membrane proton channel. CF(1) has five subunits: alpha(3), beta(3), gamma(1), delta(1), epsilon(1). CF(0) has three main subunits: a(1), b(2) and c(9-12). The alpha and beta chains form an alternating ring which encloses part of the gamma chain. CF(1) is attached to CF(0) by a central stalk formed by the gamma and epsilon chains, while a peripheral stalk is formed by the delta and b chains.</text>
</comment>
<comment type="subcellular location">
    <subcellularLocation>
        <location evidence="1">Cell membrane</location>
        <topology evidence="1">Peripheral membrane protein</topology>
    </subcellularLocation>
</comment>
<comment type="similarity">
    <text evidence="1">Belongs to the ATPase alpha/beta chains family.</text>
</comment>
<sequence length="549" mass="59530">MAELTISANDIQSAIEEYVGSFTSDTSREEVGTVVDAGDGIAHVEGLPSVMTQELLEFPGGVLGVALNLDEHSVGAVILGNFENIEEGQQVKRTGEVLSVPVGDAFLGRVINPLGQPIDGRGDIEAETRRALELQAPSVVQRQSVKEPLQTGIKAIDAMTPIGRGQRQLIIGDRKTGKTAVCVDTILNQRQNWETGDPKKQVRCVYVAVGQKGTTIASVRRALEEGGAMDYTTIVAAPASDSAGFKWLAPYTGSAVAQHWMYDGKHVLIVFDDLTKQAEAYRAISLLLRRPPGREAYPGDVFYLHSRLLERCAKLSDELGGGSLTGLPIIETKANDISAYIPTNVISITDGQCFLETDLFNQGVRPAINVGVSVSRVGGAAQIKAMKEVAGSLRLDLSQYRELEAFAAFASDLDATSKAQLDRGARLVELLKQPQYQPMPVEEQVISIFLGTGGHLDSVPVEDVRRFETELLDHIRASEENLLSTIRDTQKLTEETEEALTKVINHFKKGFASSTGESVVPDEHVEAMDEEDLGKESVKVKKPAPQKKK</sequence>
<protein>
    <recommendedName>
        <fullName evidence="1">ATP synthase subunit alpha</fullName>
        <ecNumber evidence="1">7.1.2.2</ecNumber>
    </recommendedName>
    <alternativeName>
        <fullName evidence="1">ATP synthase F1 sector subunit alpha</fullName>
    </alternativeName>
    <alternativeName>
        <fullName evidence="1">F-ATPase subunit alpha</fullName>
    </alternativeName>
</protein>
<keyword id="KW-0066">ATP synthesis</keyword>
<keyword id="KW-0067">ATP-binding</keyword>
<keyword id="KW-1003">Cell membrane</keyword>
<keyword id="KW-0139">CF(1)</keyword>
<keyword id="KW-0375">Hydrogen ion transport</keyword>
<keyword id="KW-0406">Ion transport</keyword>
<keyword id="KW-0472">Membrane</keyword>
<keyword id="KW-0547">Nucleotide-binding</keyword>
<keyword id="KW-1185">Reference proteome</keyword>
<keyword id="KW-1278">Translocase</keyword>
<keyword id="KW-0813">Transport</keyword>
<gene>
    <name evidence="1" type="primary">atpA</name>
    <name type="ordered locus">MMAR_4089</name>
</gene>
<reference key="1">
    <citation type="journal article" date="2008" name="Genome Res.">
        <title>Insights from the complete genome sequence of Mycobacterium marinum on the evolution of Mycobacterium tuberculosis.</title>
        <authorList>
            <person name="Stinear T.P."/>
            <person name="Seemann T."/>
            <person name="Harrison P.F."/>
            <person name="Jenkin G.A."/>
            <person name="Davies J.K."/>
            <person name="Johnson P.D."/>
            <person name="Abdellah Z."/>
            <person name="Arrowsmith C."/>
            <person name="Chillingworth T."/>
            <person name="Churcher C."/>
            <person name="Clarke K."/>
            <person name="Cronin A."/>
            <person name="Davis P."/>
            <person name="Goodhead I."/>
            <person name="Holroyd N."/>
            <person name="Jagels K."/>
            <person name="Lord A."/>
            <person name="Moule S."/>
            <person name="Mungall K."/>
            <person name="Norbertczak H."/>
            <person name="Quail M.A."/>
            <person name="Rabbinowitsch E."/>
            <person name="Walker D."/>
            <person name="White B."/>
            <person name="Whitehead S."/>
            <person name="Small P.L."/>
            <person name="Brosch R."/>
            <person name="Ramakrishnan L."/>
            <person name="Fischbach M.A."/>
            <person name="Parkhill J."/>
            <person name="Cole S.T."/>
        </authorList>
    </citation>
    <scope>NUCLEOTIDE SEQUENCE [LARGE SCALE GENOMIC DNA]</scope>
    <source>
        <strain>ATCC BAA-535 / M</strain>
    </source>
</reference>
<dbReference type="EC" id="7.1.2.2" evidence="1"/>
<dbReference type="EMBL" id="CP000854">
    <property type="protein sequence ID" value="ACC42496.1"/>
    <property type="molecule type" value="Genomic_DNA"/>
</dbReference>
<dbReference type="RefSeq" id="WP_012395672.1">
    <property type="nucleotide sequence ID" value="NC_010612.1"/>
</dbReference>
<dbReference type="SMR" id="B2HQK4"/>
<dbReference type="STRING" id="216594.MMAR_4089"/>
<dbReference type="KEGG" id="mmi:MMAR_4089"/>
<dbReference type="eggNOG" id="COG0056">
    <property type="taxonomic scope" value="Bacteria"/>
</dbReference>
<dbReference type="HOGENOM" id="CLU_010091_2_1_11"/>
<dbReference type="OrthoDB" id="9803053at2"/>
<dbReference type="Proteomes" id="UP000001190">
    <property type="component" value="Chromosome"/>
</dbReference>
<dbReference type="GO" id="GO:0005886">
    <property type="term" value="C:plasma membrane"/>
    <property type="evidence" value="ECO:0007669"/>
    <property type="project" value="UniProtKB-SubCell"/>
</dbReference>
<dbReference type="GO" id="GO:0045259">
    <property type="term" value="C:proton-transporting ATP synthase complex"/>
    <property type="evidence" value="ECO:0007669"/>
    <property type="project" value="UniProtKB-KW"/>
</dbReference>
<dbReference type="GO" id="GO:0043531">
    <property type="term" value="F:ADP binding"/>
    <property type="evidence" value="ECO:0007669"/>
    <property type="project" value="TreeGrafter"/>
</dbReference>
<dbReference type="GO" id="GO:0005524">
    <property type="term" value="F:ATP binding"/>
    <property type="evidence" value="ECO:0007669"/>
    <property type="project" value="UniProtKB-UniRule"/>
</dbReference>
<dbReference type="GO" id="GO:0046933">
    <property type="term" value="F:proton-transporting ATP synthase activity, rotational mechanism"/>
    <property type="evidence" value="ECO:0007669"/>
    <property type="project" value="UniProtKB-UniRule"/>
</dbReference>
<dbReference type="CDD" id="cd18113">
    <property type="entry name" value="ATP-synt_F1_alpha_C"/>
    <property type="match status" value="1"/>
</dbReference>
<dbReference type="CDD" id="cd18116">
    <property type="entry name" value="ATP-synt_F1_alpha_N"/>
    <property type="match status" value="1"/>
</dbReference>
<dbReference type="CDD" id="cd01132">
    <property type="entry name" value="F1-ATPase_alpha_CD"/>
    <property type="match status" value="1"/>
</dbReference>
<dbReference type="FunFam" id="1.20.150.20:FF:000001">
    <property type="entry name" value="ATP synthase subunit alpha"/>
    <property type="match status" value="1"/>
</dbReference>
<dbReference type="FunFam" id="2.40.30.20:FF:000001">
    <property type="entry name" value="ATP synthase subunit alpha"/>
    <property type="match status" value="1"/>
</dbReference>
<dbReference type="FunFam" id="3.40.50.300:FF:000002">
    <property type="entry name" value="ATP synthase subunit alpha"/>
    <property type="match status" value="1"/>
</dbReference>
<dbReference type="Gene3D" id="2.40.30.20">
    <property type="match status" value="1"/>
</dbReference>
<dbReference type="Gene3D" id="1.20.150.20">
    <property type="entry name" value="ATP synthase alpha/beta chain, C-terminal domain"/>
    <property type="match status" value="1"/>
</dbReference>
<dbReference type="Gene3D" id="3.40.50.300">
    <property type="entry name" value="P-loop containing nucleotide triphosphate hydrolases"/>
    <property type="match status" value="1"/>
</dbReference>
<dbReference type="HAMAP" id="MF_01346">
    <property type="entry name" value="ATP_synth_alpha_bact"/>
    <property type="match status" value="1"/>
</dbReference>
<dbReference type="InterPro" id="IPR023366">
    <property type="entry name" value="ATP_synth_asu-like_sf"/>
</dbReference>
<dbReference type="InterPro" id="IPR000793">
    <property type="entry name" value="ATP_synth_asu_C"/>
</dbReference>
<dbReference type="InterPro" id="IPR038376">
    <property type="entry name" value="ATP_synth_asu_C_sf"/>
</dbReference>
<dbReference type="InterPro" id="IPR033732">
    <property type="entry name" value="ATP_synth_F1_a_nt-bd_dom"/>
</dbReference>
<dbReference type="InterPro" id="IPR005294">
    <property type="entry name" value="ATP_synth_F1_asu"/>
</dbReference>
<dbReference type="InterPro" id="IPR020003">
    <property type="entry name" value="ATPase_a/bsu_AS"/>
</dbReference>
<dbReference type="InterPro" id="IPR004100">
    <property type="entry name" value="ATPase_F1/V1/A1_a/bsu_N"/>
</dbReference>
<dbReference type="InterPro" id="IPR036121">
    <property type="entry name" value="ATPase_F1/V1/A1_a/bsu_N_sf"/>
</dbReference>
<dbReference type="InterPro" id="IPR000194">
    <property type="entry name" value="ATPase_F1/V1/A1_a/bsu_nucl-bd"/>
</dbReference>
<dbReference type="InterPro" id="IPR027417">
    <property type="entry name" value="P-loop_NTPase"/>
</dbReference>
<dbReference type="NCBIfam" id="TIGR00962">
    <property type="entry name" value="atpA"/>
    <property type="match status" value="1"/>
</dbReference>
<dbReference type="NCBIfam" id="NF009884">
    <property type="entry name" value="PRK13343.1"/>
    <property type="match status" value="1"/>
</dbReference>
<dbReference type="PANTHER" id="PTHR48082">
    <property type="entry name" value="ATP SYNTHASE SUBUNIT ALPHA, MITOCHONDRIAL"/>
    <property type="match status" value="1"/>
</dbReference>
<dbReference type="PANTHER" id="PTHR48082:SF2">
    <property type="entry name" value="ATP SYNTHASE SUBUNIT ALPHA, MITOCHONDRIAL"/>
    <property type="match status" value="1"/>
</dbReference>
<dbReference type="Pfam" id="PF00006">
    <property type="entry name" value="ATP-synt_ab"/>
    <property type="match status" value="1"/>
</dbReference>
<dbReference type="Pfam" id="PF00306">
    <property type="entry name" value="ATP-synt_ab_C"/>
    <property type="match status" value="1"/>
</dbReference>
<dbReference type="Pfam" id="PF02874">
    <property type="entry name" value="ATP-synt_ab_N"/>
    <property type="match status" value="1"/>
</dbReference>
<dbReference type="PIRSF" id="PIRSF039088">
    <property type="entry name" value="F_ATPase_subunit_alpha"/>
    <property type="match status" value="1"/>
</dbReference>
<dbReference type="SUPFAM" id="SSF47917">
    <property type="entry name" value="C-terminal domain of alpha and beta subunits of F1 ATP synthase"/>
    <property type="match status" value="1"/>
</dbReference>
<dbReference type="SUPFAM" id="SSF50615">
    <property type="entry name" value="N-terminal domain of alpha and beta subunits of F1 ATP synthase"/>
    <property type="match status" value="1"/>
</dbReference>
<dbReference type="SUPFAM" id="SSF52540">
    <property type="entry name" value="P-loop containing nucleoside triphosphate hydrolases"/>
    <property type="match status" value="1"/>
</dbReference>
<dbReference type="PROSITE" id="PS00152">
    <property type="entry name" value="ATPASE_ALPHA_BETA"/>
    <property type="match status" value="1"/>
</dbReference>
<organism>
    <name type="scientific">Mycobacterium marinum (strain ATCC BAA-535 / M)</name>
    <dbReference type="NCBI Taxonomy" id="216594"/>
    <lineage>
        <taxon>Bacteria</taxon>
        <taxon>Bacillati</taxon>
        <taxon>Actinomycetota</taxon>
        <taxon>Actinomycetes</taxon>
        <taxon>Mycobacteriales</taxon>
        <taxon>Mycobacteriaceae</taxon>
        <taxon>Mycobacterium</taxon>
        <taxon>Mycobacterium ulcerans group</taxon>
    </lineage>
</organism>